<comment type="function">
    <text evidence="4">Mitogen-activated protein kinase (MAPK), part of the high-osmolarity glycerol (HOG) pathway (PubMed:26878695). With sakA, plays a role in the osmotic and oxidative stress responses (PubMed:26878695). Involved in paradoxical growth, the cell wall integrity (CWI) pathway and biofilm formation (PubMed:26878695). SakA and mpkC collaborate during virulence and mpkC could act by modulating sakA activity upon exposure to several types of stresses and during cell wall biosynthesis (PubMed:26878695).</text>
</comment>
<comment type="catalytic activity">
    <reaction evidence="7">
        <text>L-seryl-[protein] + ATP = O-phospho-L-seryl-[protein] + ADP + H(+)</text>
        <dbReference type="Rhea" id="RHEA:17989"/>
        <dbReference type="Rhea" id="RHEA-COMP:9863"/>
        <dbReference type="Rhea" id="RHEA-COMP:11604"/>
        <dbReference type="ChEBI" id="CHEBI:15378"/>
        <dbReference type="ChEBI" id="CHEBI:29999"/>
        <dbReference type="ChEBI" id="CHEBI:30616"/>
        <dbReference type="ChEBI" id="CHEBI:83421"/>
        <dbReference type="ChEBI" id="CHEBI:456216"/>
        <dbReference type="EC" id="2.7.11.24"/>
    </reaction>
    <physiologicalReaction direction="left-to-right" evidence="7">
        <dbReference type="Rhea" id="RHEA:17990"/>
    </physiologicalReaction>
</comment>
<comment type="catalytic activity">
    <reaction evidence="7">
        <text>L-threonyl-[protein] + ATP = O-phospho-L-threonyl-[protein] + ADP + H(+)</text>
        <dbReference type="Rhea" id="RHEA:46608"/>
        <dbReference type="Rhea" id="RHEA-COMP:11060"/>
        <dbReference type="Rhea" id="RHEA-COMP:11605"/>
        <dbReference type="ChEBI" id="CHEBI:15378"/>
        <dbReference type="ChEBI" id="CHEBI:30013"/>
        <dbReference type="ChEBI" id="CHEBI:30616"/>
        <dbReference type="ChEBI" id="CHEBI:61977"/>
        <dbReference type="ChEBI" id="CHEBI:456216"/>
        <dbReference type="EC" id="2.7.11.24"/>
    </reaction>
    <physiologicalReaction direction="left-to-right" evidence="7">
        <dbReference type="Rhea" id="RHEA:46609"/>
    </physiologicalReaction>
</comment>
<comment type="cofactor">
    <cofactor evidence="3">
        <name>Mg(2+)</name>
        <dbReference type="ChEBI" id="CHEBI:18420"/>
    </cofactor>
</comment>
<comment type="activity regulation">
    <text evidence="3">Activated by threonine and tyrosine phosphorylation.</text>
</comment>
<comment type="subcellular location">
    <subcellularLocation>
        <location evidence="4">Nucleus</location>
    </subcellularLocation>
    <text evidence="4">Translocates to the nucleus upon osmotic stress and cell wall damage.</text>
</comment>
<comment type="disruption phenotype">
    <text evidence="4">Increases the sensitivity to osmotic and oxidative stresses as well as to cell wall damaging agents when sakA is also deleted (PubMed:26878695). Affects virulence when sakA is also deleted (PubMed:26878695). The double sakA/mpkC deletion also abolishes mpkA phosphorylation (PubMed:26878695).</text>
</comment>
<comment type="similarity">
    <text evidence="6">Belongs to the protein kinase superfamily. Ser/Thr protein kinase family. MAP kinase subfamily.</text>
</comment>
<organism>
    <name type="scientific">Aspergillus fumigatus (strain CBS 144.89 / FGSC A1163 / CEA10)</name>
    <name type="common">Neosartorya fumigata</name>
    <dbReference type="NCBI Taxonomy" id="451804"/>
    <lineage>
        <taxon>Eukaryota</taxon>
        <taxon>Fungi</taxon>
        <taxon>Dikarya</taxon>
        <taxon>Ascomycota</taxon>
        <taxon>Pezizomycotina</taxon>
        <taxon>Eurotiomycetes</taxon>
        <taxon>Eurotiomycetidae</taxon>
        <taxon>Eurotiales</taxon>
        <taxon>Aspergillaceae</taxon>
        <taxon>Aspergillus</taxon>
        <taxon>Aspergillus subgen. Fumigati</taxon>
    </lineage>
</organism>
<name>MPKC_ASPFC</name>
<feature type="chain" id="PRO_0000454883" description="Mitogen-activated protein kinase mpkC">
    <location>
        <begin position="1"/>
        <end position="378"/>
    </location>
</feature>
<feature type="domain" description="Protein kinase" evidence="1">
    <location>
        <begin position="20"/>
        <end position="300"/>
    </location>
</feature>
<feature type="active site" description="Proton acceptor" evidence="2">
    <location>
        <position position="141"/>
    </location>
</feature>
<feature type="binding site" evidence="1">
    <location>
        <begin position="26"/>
        <end position="34"/>
    </location>
    <ligand>
        <name>ATP</name>
        <dbReference type="ChEBI" id="CHEBI:30616"/>
    </ligand>
</feature>
<feature type="binding site" evidence="1">
    <location>
        <position position="49"/>
    </location>
    <ligand>
        <name>ATP</name>
        <dbReference type="ChEBI" id="CHEBI:30616"/>
    </ligand>
</feature>
<evidence type="ECO:0000255" key="1">
    <source>
        <dbReference type="PROSITE-ProRule" id="PRU00159"/>
    </source>
</evidence>
<evidence type="ECO:0000255" key="2">
    <source>
        <dbReference type="PROSITE-ProRule" id="PRU10027"/>
    </source>
</evidence>
<evidence type="ECO:0000255" key="3">
    <source>
        <dbReference type="RuleBase" id="RU361165"/>
    </source>
</evidence>
<evidence type="ECO:0000269" key="4">
    <source>
    </source>
</evidence>
<evidence type="ECO:0000303" key="5">
    <source>
    </source>
</evidence>
<evidence type="ECO:0000305" key="6"/>
<evidence type="ECO:0000305" key="7">
    <source>
    </source>
</evidence>
<dbReference type="EC" id="2.7.11.24" evidence="7"/>
<dbReference type="EMBL" id="DS499597">
    <property type="protein sequence ID" value="EDP51653.1"/>
    <property type="molecule type" value="Genomic_DNA"/>
</dbReference>
<dbReference type="SMR" id="B0Y462"/>
<dbReference type="EnsemblFungi" id="EDP51653">
    <property type="protein sequence ID" value="EDP51653"/>
    <property type="gene ID" value="AFUB_056640"/>
</dbReference>
<dbReference type="VEuPathDB" id="FungiDB:AFUB_056640"/>
<dbReference type="HOGENOM" id="CLU_000288_181_1_1"/>
<dbReference type="OrthoDB" id="35584at5052"/>
<dbReference type="PhylomeDB" id="B0Y462"/>
<dbReference type="PHI-base" id="PHI:123499"/>
<dbReference type="Proteomes" id="UP000001699">
    <property type="component" value="Unassembled WGS sequence"/>
</dbReference>
<dbReference type="GO" id="GO:0005634">
    <property type="term" value="C:nucleus"/>
    <property type="evidence" value="ECO:0007669"/>
    <property type="project" value="UniProtKB-SubCell"/>
</dbReference>
<dbReference type="GO" id="GO:0005524">
    <property type="term" value="F:ATP binding"/>
    <property type="evidence" value="ECO:0007669"/>
    <property type="project" value="UniProtKB-KW"/>
</dbReference>
<dbReference type="GO" id="GO:0004707">
    <property type="term" value="F:MAP kinase activity"/>
    <property type="evidence" value="ECO:0007669"/>
    <property type="project" value="UniProtKB-EC"/>
</dbReference>
<dbReference type="GO" id="GO:0106310">
    <property type="term" value="F:protein serine kinase activity"/>
    <property type="evidence" value="ECO:0007669"/>
    <property type="project" value="RHEA"/>
</dbReference>
<dbReference type="FunFam" id="1.10.510.10:FF:000049">
    <property type="entry name" value="Mitogen-activated protein kinase"/>
    <property type="match status" value="1"/>
</dbReference>
<dbReference type="FunFam" id="3.30.200.20:FF:000046">
    <property type="entry name" value="Mitogen-activated protein kinase"/>
    <property type="match status" value="1"/>
</dbReference>
<dbReference type="Gene3D" id="3.30.200.20">
    <property type="entry name" value="Phosphorylase Kinase, domain 1"/>
    <property type="match status" value="1"/>
</dbReference>
<dbReference type="Gene3D" id="1.10.510.10">
    <property type="entry name" value="Transferase(Phosphotransferase) domain 1"/>
    <property type="match status" value="1"/>
</dbReference>
<dbReference type="InterPro" id="IPR011009">
    <property type="entry name" value="Kinase-like_dom_sf"/>
</dbReference>
<dbReference type="InterPro" id="IPR050117">
    <property type="entry name" value="MAP_kinase"/>
</dbReference>
<dbReference type="InterPro" id="IPR003527">
    <property type="entry name" value="MAP_kinase_CS"/>
</dbReference>
<dbReference type="InterPro" id="IPR000719">
    <property type="entry name" value="Prot_kinase_dom"/>
</dbReference>
<dbReference type="InterPro" id="IPR017441">
    <property type="entry name" value="Protein_kinase_ATP_BS"/>
</dbReference>
<dbReference type="InterPro" id="IPR008271">
    <property type="entry name" value="Ser/Thr_kinase_AS"/>
</dbReference>
<dbReference type="PANTHER" id="PTHR24055">
    <property type="entry name" value="MITOGEN-ACTIVATED PROTEIN KINASE"/>
    <property type="match status" value="1"/>
</dbReference>
<dbReference type="Pfam" id="PF00069">
    <property type="entry name" value="Pkinase"/>
    <property type="match status" value="1"/>
</dbReference>
<dbReference type="SMART" id="SM00220">
    <property type="entry name" value="S_TKc"/>
    <property type="match status" value="1"/>
</dbReference>
<dbReference type="SUPFAM" id="SSF56112">
    <property type="entry name" value="Protein kinase-like (PK-like)"/>
    <property type="match status" value="1"/>
</dbReference>
<dbReference type="PROSITE" id="PS01351">
    <property type="entry name" value="MAPK"/>
    <property type="match status" value="1"/>
</dbReference>
<dbReference type="PROSITE" id="PS00107">
    <property type="entry name" value="PROTEIN_KINASE_ATP"/>
    <property type="match status" value="1"/>
</dbReference>
<dbReference type="PROSITE" id="PS50011">
    <property type="entry name" value="PROTEIN_KINASE_DOM"/>
    <property type="match status" value="1"/>
</dbReference>
<dbReference type="PROSITE" id="PS00108">
    <property type="entry name" value="PROTEIN_KINASE_ST"/>
    <property type="match status" value="1"/>
</dbReference>
<protein>
    <recommendedName>
        <fullName evidence="5">Mitogen-activated protein kinase mpkC</fullName>
        <shortName evidence="5">MAPK mpkC</shortName>
        <ecNumber evidence="7">2.7.11.24</ecNumber>
    </recommendedName>
</protein>
<accession>B0Y462</accession>
<gene>
    <name evidence="5" type="primary">mpkC</name>
    <name type="ORF">AFUB_056640</name>
</gene>
<proteinExistence type="inferred from homology"/>
<reference key="1">
    <citation type="journal article" date="2008" name="PLoS Genet.">
        <title>Genomic islands in the pathogenic filamentous fungus Aspergillus fumigatus.</title>
        <authorList>
            <person name="Fedorova N.D."/>
            <person name="Khaldi N."/>
            <person name="Joardar V.S."/>
            <person name="Maiti R."/>
            <person name="Amedeo P."/>
            <person name="Anderson M.J."/>
            <person name="Crabtree J."/>
            <person name="Silva J.C."/>
            <person name="Badger J.H."/>
            <person name="Albarraq A."/>
            <person name="Angiuoli S."/>
            <person name="Bussey H."/>
            <person name="Bowyer P."/>
            <person name="Cotty P.J."/>
            <person name="Dyer P.S."/>
            <person name="Egan A."/>
            <person name="Galens K."/>
            <person name="Fraser-Liggett C.M."/>
            <person name="Haas B.J."/>
            <person name="Inman J.M."/>
            <person name="Kent R."/>
            <person name="Lemieux S."/>
            <person name="Malavazi I."/>
            <person name="Orvis J."/>
            <person name="Roemer T."/>
            <person name="Ronning C.M."/>
            <person name="Sundaram J.P."/>
            <person name="Sutton G."/>
            <person name="Turner G."/>
            <person name="Venter J.C."/>
            <person name="White O.R."/>
            <person name="Whitty B.R."/>
            <person name="Youngman P."/>
            <person name="Wolfe K.H."/>
            <person name="Goldman G.H."/>
            <person name="Wortman J.R."/>
            <person name="Jiang B."/>
            <person name="Denning D.W."/>
            <person name="Nierman W.C."/>
        </authorList>
    </citation>
    <scope>NUCLEOTIDE SEQUENCE [LARGE SCALE GENOMIC DNA]</scope>
    <source>
        <strain>CBS 144.89 / FGSC A1163 / CEA10</strain>
    </source>
</reference>
<reference key="2">
    <citation type="journal article" date="2016" name="Mol. Microbiol.">
        <title>Mitogen activated protein kinases SakA(HOG1) and MpkC collaborate for Aspergillus fumigatus virulence.</title>
        <authorList>
            <person name="Bruder Nascimento A.C."/>
            <person name="Dos Reis T.F."/>
            <person name="de Castro P.A."/>
            <person name="Hori J.I."/>
            <person name="Bom V.L."/>
            <person name="de Assis L.J."/>
            <person name="Ramalho L.N."/>
            <person name="Rocha M.C."/>
            <person name="Malavazi I."/>
            <person name="Brown N.A."/>
            <person name="Valiante V."/>
            <person name="Brakhage A.A."/>
            <person name="Hagiwara D."/>
            <person name="Goldman G.H."/>
        </authorList>
    </citation>
    <scope>FUNCTION</scope>
    <scope>DISRUPTION PHENOTYPE</scope>
    <scope>SUBCELLULAR LOCATION</scope>
</reference>
<keyword id="KW-0067">ATP-binding</keyword>
<keyword id="KW-0418">Kinase</keyword>
<keyword id="KW-0460">Magnesium</keyword>
<keyword id="KW-0547">Nucleotide-binding</keyword>
<keyword id="KW-0539">Nucleus</keyword>
<keyword id="KW-0723">Serine/threonine-protein kinase</keyword>
<keyword id="KW-0808">Transferase</keyword>
<sequence>MAEFVRAEVLGTKFEYTTRYVNPQPIGMGSFGLVCSAFDQITQQPVALKKIMKPFDSSSLAKRTYREIRLLKYLRHENLICMRDIFISPLEDIYIATELLGTDLGRLLSIKPLDSKFSQYFIYQILRGLKYIHSANVIHRDLKPTNILINENCDLKICDFGLARLQEPQMTGYVATRYYRAPEIMLTWQRYGVQVDVWSAGCILAEMLRGKPLFPGKDHVHQFHLITNILGNPPDAVIEKITSKNTVNFVKSLPSREPRDLSTVVPKDTDFDAIDLLKKMLVIDPDTRISAQDALRHPYLAPYHDPTDEPVASGPFDWSFDSADFPKETSKIMIYSEVLDYLNVDNPADPAPFDPSTPFDPSALEREFSEFLSDSGQT</sequence>